<accession>Q9ZSD6</accession>
<evidence type="ECO:0000250" key="1"/>
<evidence type="ECO:0000269" key="2">
    <source>
    </source>
</evidence>
<evidence type="ECO:0000305" key="3"/>
<evidence type="ECO:0007829" key="4">
    <source>
        <dbReference type="PDB" id="2GEZ"/>
    </source>
</evidence>
<name>ASPG_LUPLU</name>
<protein>
    <recommendedName>
        <fullName>Isoaspartyl peptidase/L-asparaginase</fullName>
        <shortName>LlA</shortName>
        <ecNumber>3.4.19.5</ecNumber>
    </recommendedName>
    <alternativeName>
        <fullName>L-asparagine amidohydrolase</fullName>
    </alternativeName>
    <alternativeName>
        <fullName>Potassium-independent L-asparaginase</fullName>
    </alternativeName>
    <component>
        <recommendedName>
            <fullName>Isoaspartyl peptidase/L-asparaginase subunit alpha</fullName>
        </recommendedName>
    </component>
    <component>
        <recommendedName>
            <fullName>Isoaspartyl peptidase/L-asparaginase subunit beta</fullName>
        </recommendedName>
    </component>
</protein>
<keyword id="KW-0002">3D-structure</keyword>
<keyword id="KW-0068">Autocatalytic cleavage</keyword>
<keyword id="KW-0378">Hydrolase</keyword>
<keyword id="KW-0645">Protease</keyword>
<feature type="chain" id="PRO_0000045456" description="Isoaspartyl peptidase/L-asparaginase subunit alpha">
    <location>
        <begin position="1"/>
        <end position="192"/>
    </location>
</feature>
<feature type="chain" id="PRO_0000045457" description="Isoaspartyl peptidase/L-asparaginase subunit beta">
    <location>
        <begin position="193"/>
        <end position="325"/>
    </location>
</feature>
<feature type="active site" description="Nucleophile" evidence="1">
    <location>
        <position position="193"/>
    </location>
</feature>
<feature type="binding site" evidence="1">
    <location>
        <begin position="221"/>
        <end position="224"/>
    </location>
    <ligand>
        <name>substrate</name>
    </ligand>
</feature>
<feature type="binding site" evidence="1">
    <location>
        <begin position="243"/>
        <end position="246"/>
    </location>
    <ligand>
        <name>substrate</name>
    </ligand>
</feature>
<feature type="site" description="Cleavage; by autolysis">
    <location>
        <begin position="192"/>
        <end position="193"/>
    </location>
</feature>
<feature type="strand" evidence="4">
    <location>
        <begin position="5"/>
        <end position="13"/>
    </location>
</feature>
<feature type="helix" evidence="4">
    <location>
        <begin position="21"/>
        <end position="43"/>
    </location>
</feature>
<feature type="helix" evidence="4">
    <location>
        <begin position="48"/>
        <end position="61"/>
    </location>
</feature>
<feature type="strand" evidence="4">
    <location>
        <begin position="65"/>
        <end position="68"/>
    </location>
</feature>
<feature type="strand" evidence="4">
    <location>
        <begin position="81"/>
        <end position="87"/>
    </location>
</feature>
<feature type="turn" evidence="4">
    <location>
        <begin position="88"/>
        <end position="91"/>
    </location>
</feature>
<feature type="strand" evidence="4">
    <location>
        <begin position="92"/>
        <end position="103"/>
    </location>
</feature>
<feature type="helix" evidence="4">
    <location>
        <begin position="105"/>
        <end position="115"/>
    </location>
</feature>
<feature type="strand" evidence="4">
    <location>
        <begin position="119"/>
        <end position="122"/>
    </location>
</feature>
<feature type="helix" evidence="4">
    <location>
        <begin position="123"/>
        <end position="133"/>
    </location>
</feature>
<feature type="helix" evidence="4">
    <location>
        <begin position="140"/>
        <end position="143"/>
    </location>
</feature>
<feature type="helix" evidence="4">
    <location>
        <begin position="146"/>
        <end position="158"/>
    </location>
</feature>
<feature type="strand" evidence="4">
    <location>
        <begin position="194"/>
        <end position="199"/>
    </location>
</feature>
<feature type="strand" evidence="4">
    <location>
        <begin position="205"/>
        <end position="211"/>
    </location>
</feature>
<feature type="turn" evidence="4">
    <location>
        <begin position="229"/>
        <end position="231"/>
    </location>
</feature>
<feature type="strand" evidence="4">
    <location>
        <begin position="232"/>
        <end position="234"/>
    </location>
</feature>
<feature type="strand" evidence="4">
    <location>
        <begin position="236"/>
        <end position="244"/>
    </location>
</feature>
<feature type="helix" evidence="4">
    <location>
        <begin position="246"/>
        <end position="251"/>
    </location>
</feature>
<feature type="helix" evidence="4">
    <location>
        <begin position="254"/>
        <end position="265"/>
    </location>
</feature>
<feature type="helix" evidence="4">
    <location>
        <begin position="269"/>
        <end position="278"/>
    </location>
</feature>
<feature type="strand" evidence="4">
    <location>
        <begin position="285"/>
        <end position="292"/>
    </location>
</feature>
<feature type="strand" evidence="4">
    <location>
        <begin position="301"/>
        <end position="312"/>
    </location>
</feature>
<feature type="strand" evidence="4">
    <location>
        <begin position="317"/>
        <end position="322"/>
    </location>
</feature>
<comment type="function">
    <text>Degrades proteins damaged by L-isoaspartyl residue formation (also known as beta-Asp residues). Also has L-asparaginase activity, which is used to liberate stored nitrogen during seed development.</text>
</comment>
<comment type="catalytic activity">
    <reaction>
        <text>Cleavage of a beta-linked Asp residue from the N-terminus of a polypeptide.</text>
        <dbReference type="EC" id="3.4.19.5"/>
    </reaction>
</comment>
<comment type="biophysicochemical properties">
    <kinetics>
        <KM evidence="2">0.136 mM for beta-L-Asp-L-Leu</KM>
        <KM evidence="2">4.8 mM for L-Asn</KM>
        <text>No activity for GlcNAc-Asn, Gly-L-Asn, L-Asp, L-Asn-alpha-amide, L-Gln or aspartylglucosamides.</text>
    </kinetics>
</comment>
<comment type="subunit">
    <text evidence="2">Heterotetramer of two alpha and two beta chains arranged as a dimer of alpha/beta heterodimers.</text>
</comment>
<comment type="tissue specificity">
    <text>Expressed in ripening seeds and developing nodules.</text>
</comment>
<comment type="PTM">
    <text>Cleaved into an alpha and beta chain by autocatalysis; this activates the enzyme. The N-terminal residue of the beta subunit is responsible for the nucleophile hydrolase activity.</text>
</comment>
<comment type="mass spectrometry">
    <molecule>Isoaspartyl peptidase/L-asparaginase subunit alpha</molecule>
    <text>Subunit alpha overexpressed as a His-tagged protein where the His tag has the mass 2050.</text>
</comment>
<comment type="mass spectrometry">
    <molecule>Isoaspartyl peptidase/L-asparaginase subunit beta</molecule>
    <text>Subunit beta.</text>
</comment>
<comment type="similarity">
    <text evidence="3">Belongs to the Ntn-hydrolase family.</text>
</comment>
<reference key="1">
    <citation type="online journal article" date="1999" name="Plant Gene Register">
        <title>Isolation and characterization of cDNA encoding L-asparaginase from Lupinus luteus.</title>
        <authorList>
            <person name="Borek D."/>
            <person name="Podkowinski J."/>
            <person name="Kisiel A."/>
            <person name="Jaskolski M."/>
        </authorList>
        <locator>PGR99-050</locator>
    </citation>
    <scope>NUCLEOTIDE SEQUENCE [MRNA]</scope>
    <source>
        <strain>cv. Ventus</strain>
        <tissue>Root</tissue>
    </source>
</reference>
<reference key="2">
    <citation type="journal article" date="2004" name="Eur. J. Biochem.">
        <title>Expression, purification and catalytic activity of Lupinus luteus asparagine beta-amidohydrolase and its Escherichia coli homolog.</title>
        <authorList>
            <person name="Borek D."/>
            <person name="Michalska K."/>
            <person name="Brzezinski K."/>
            <person name="Kisiel A."/>
            <person name="Podkowinski J."/>
            <person name="Bonthron D.T."/>
            <person name="Krowarsch D."/>
            <person name="Otlewski J."/>
            <person name="Jaskolski M."/>
        </authorList>
    </citation>
    <scope>AUTOCATALYTIC CLEAVAGE</scope>
    <scope>SUBUNIT</scope>
    <scope>KINETIC PARAMETERS</scope>
    <scope>MASS SPECTROMETRY</scope>
</reference>
<reference key="3">
    <citation type="journal article" date="2006" name="J. Mol. Biol.">
        <title>Crystal structure of plant asparaginase.</title>
        <authorList>
            <person name="Michalska K."/>
            <person name="Bujacz G."/>
            <person name="Jaskolski M."/>
        </authorList>
    </citation>
    <scope>X-RAY CRYSTALLOGRAPHY (2.6 ANGSTROMS)</scope>
</reference>
<organism>
    <name type="scientific">Lupinus luteus</name>
    <name type="common">European yellow lupine</name>
    <dbReference type="NCBI Taxonomy" id="3873"/>
    <lineage>
        <taxon>Eukaryota</taxon>
        <taxon>Viridiplantae</taxon>
        <taxon>Streptophyta</taxon>
        <taxon>Embryophyta</taxon>
        <taxon>Tracheophyta</taxon>
        <taxon>Spermatophyta</taxon>
        <taxon>Magnoliopsida</taxon>
        <taxon>eudicotyledons</taxon>
        <taxon>Gunneridae</taxon>
        <taxon>Pentapetalae</taxon>
        <taxon>rosids</taxon>
        <taxon>fabids</taxon>
        <taxon>Fabales</taxon>
        <taxon>Fabaceae</taxon>
        <taxon>Papilionoideae</taxon>
        <taxon>50 kb inversion clade</taxon>
        <taxon>genistoids sensu lato</taxon>
        <taxon>core genistoids</taxon>
        <taxon>Genisteae</taxon>
        <taxon>Lupinus</taxon>
    </lineage>
</organism>
<proteinExistence type="evidence at protein level"/>
<dbReference type="EC" id="3.4.19.5"/>
<dbReference type="EMBL" id="AF112444">
    <property type="protein sequence ID" value="AAD03742.1"/>
    <property type="molecule type" value="mRNA"/>
</dbReference>
<dbReference type="PDB" id="2GEZ">
    <property type="method" value="X-ray"/>
    <property type="resolution" value="2.60 A"/>
    <property type="chains" value="A/C/E/G=1-192, B/D/F/H=193-325"/>
</dbReference>
<dbReference type="PDBsum" id="2GEZ"/>
<dbReference type="SMR" id="Q9ZSD6"/>
<dbReference type="MEROPS" id="T02.A01"/>
<dbReference type="BRENDA" id="3.4.19.5">
    <property type="organism ID" value="3093"/>
</dbReference>
<dbReference type="SABIO-RK" id="Q9ZSD6"/>
<dbReference type="EvolutionaryTrace" id="Q9ZSD6"/>
<dbReference type="GO" id="GO:0008798">
    <property type="term" value="F:beta-aspartyl-peptidase activity"/>
    <property type="evidence" value="ECO:0007669"/>
    <property type="project" value="UniProtKB-EC"/>
</dbReference>
<dbReference type="GO" id="GO:0016811">
    <property type="term" value="F:hydrolase activity, acting on carbon-nitrogen (but not peptide) bonds, in linear amides"/>
    <property type="evidence" value="ECO:0007669"/>
    <property type="project" value="UniProtKB-ARBA"/>
</dbReference>
<dbReference type="GO" id="GO:0006508">
    <property type="term" value="P:proteolysis"/>
    <property type="evidence" value="ECO:0007669"/>
    <property type="project" value="UniProtKB-KW"/>
</dbReference>
<dbReference type="CDD" id="cd04701">
    <property type="entry name" value="Asparaginase_2"/>
    <property type="match status" value="1"/>
</dbReference>
<dbReference type="FunFam" id="3.60.20.30:FF:000001">
    <property type="entry name" value="Isoaspartyl peptidase/L-asparaginase"/>
    <property type="match status" value="1"/>
</dbReference>
<dbReference type="Gene3D" id="3.60.20.30">
    <property type="entry name" value="(Glycosyl)asparaginase"/>
    <property type="match status" value="1"/>
</dbReference>
<dbReference type="InterPro" id="IPR029055">
    <property type="entry name" value="Ntn_hydrolases_N"/>
</dbReference>
<dbReference type="InterPro" id="IPR000246">
    <property type="entry name" value="Peptidase_T2"/>
</dbReference>
<dbReference type="PANTHER" id="PTHR10188">
    <property type="entry name" value="L-ASPARAGINASE"/>
    <property type="match status" value="1"/>
</dbReference>
<dbReference type="PANTHER" id="PTHR10188:SF6">
    <property type="entry name" value="N(4)-(BETA-N-ACETYLGLUCOSAMINYL)-L-ASPARAGINASE"/>
    <property type="match status" value="1"/>
</dbReference>
<dbReference type="Pfam" id="PF01112">
    <property type="entry name" value="Asparaginase_2"/>
    <property type="match status" value="1"/>
</dbReference>
<dbReference type="SUPFAM" id="SSF56235">
    <property type="entry name" value="N-terminal nucleophile aminohydrolases (Ntn hydrolases)"/>
    <property type="match status" value="1"/>
</dbReference>
<sequence>MGGWSIALHGGAGDIPFSLPPERRKPREEGLRHCLQIGVEALKAQKPPLDVVELVVRELENIEHFNAGIGSVLTNSGTVEMEASIMDGNTMKCGAVSGLSTVLNPISLARLVMDKTPHIYLAFQGAQDFAKQQGVETVDSSHLITAENVERLKLAIEANRVQVDYSQYNYPEPVKDDAEKELPLTNGDSQIGTVGCVAVDSHGNLASATSTGGLVNKMVGRIGDTPLIGAGTYANELCAVSATGKGEEIIRATVARDVAALMEFKGLSLKEAADFVIHERTPKGTVGLIAVSAAGEIAMPFNTTGMFRACATEDGYSEIAIWPTT</sequence>